<keyword id="KW-1185">Reference proteome</keyword>
<keyword id="KW-0687">Ribonucleoprotein</keyword>
<keyword id="KW-0689">Ribosomal protein</keyword>
<keyword id="KW-0694">RNA-binding</keyword>
<keyword id="KW-0699">rRNA-binding</keyword>
<name>RS15_THEAB</name>
<reference key="1">
    <citation type="journal article" date="2009" name="J. Bacteriol.">
        <title>The genome of Thermosipho africanus TCF52B: lateral genetic connections to the Firmicutes and Archaea.</title>
        <authorList>
            <person name="Nesboe C.L."/>
            <person name="Bapteste E."/>
            <person name="Curtis B."/>
            <person name="Dahle H."/>
            <person name="Lopez P."/>
            <person name="Macleod D."/>
            <person name="Dlutek M."/>
            <person name="Bowman S."/>
            <person name="Zhaxybayeva O."/>
            <person name="Birkeland N.-K."/>
            <person name="Doolittle W.F."/>
        </authorList>
    </citation>
    <scope>NUCLEOTIDE SEQUENCE [LARGE SCALE GENOMIC DNA]</scope>
    <source>
        <strain>TCF52B</strain>
    </source>
</reference>
<feature type="chain" id="PRO_1000143182" description="Small ribosomal subunit protein uS15">
    <location>
        <begin position="1"/>
        <end position="84"/>
    </location>
</feature>
<sequence length="84" mass="10003">MNKEEIIKEFQIHEGDTGSTEVQIALLTARIKHLTEHLKKHPKDYHSRRGLMKLVGRRRKILKYLRNKDPESYKNVIQKLGLRK</sequence>
<evidence type="ECO:0000255" key="1">
    <source>
        <dbReference type="HAMAP-Rule" id="MF_01343"/>
    </source>
</evidence>
<evidence type="ECO:0000305" key="2"/>
<protein>
    <recommendedName>
        <fullName evidence="1">Small ribosomal subunit protein uS15</fullName>
    </recommendedName>
    <alternativeName>
        <fullName evidence="2">30S ribosomal protein S15</fullName>
    </alternativeName>
</protein>
<proteinExistence type="inferred from homology"/>
<organism>
    <name type="scientific">Thermosipho africanus (strain TCF52B)</name>
    <dbReference type="NCBI Taxonomy" id="484019"/>
    <lineage>
        <taxon>Bacteria</taxon>
        <taxon>Thermotogati</taxon>
        <taxon>Thermotogota</taxon>
        <taxon>Thermotogae</taxon>
        <taxon>Thermotogales</taxon>
        <taxon>Fervidobacteriaceae</taxon>
        <taxon>Thermosipho</taxon>
    </lineage>
</organism>
<gene>
    <name evidence="1" type="primary">rpsO</name>
    <name type="ordered locus">THA_279</name>
</gene>
<accession>B7IFB5</accession>
<comment type="function">
    <text evidence="1">One of the primary rRNA binding proteins, it binds directly to 16S rRNA where it helps nucleate assembly of the platform of the 30S subunit by binding and bridging several RNA helices of the 16S rRNA.</text>
</comment>
<comment type="function">
    <text evidence="1">Forms an intersubunit bridge (bridge B4) with the 23S rRNA of the 50S subunit in the ribosome.</text>
</comment>
<comment type="subunit">
    <text evidence="1">Part of the 30S ribosomal subunit. Forms a bridge to the 50S subunit in the 70S ribosome, contacting the 23S rRNA.</text>
</comment>
<comment type="similarity">
    <text evidence="1">Belongs to the universal ribosomal protein uS15 family.</text>
</comment>
<dbReference type="EMBL" id="CP001185">
    <property type="protein sequence ID" value="ACJ74779.1"/>
    <property type="molecule type" value="Genomic_DNA"/>
</dbReference>
<dbReference type="RefSeq" id="WP_004103868.1">
    <property type="nucleotide sequence ID" value="NC_011653.1"/>
</dbReference>
<dbReference type="SMR" id="B7IFB5"/>
<dbReference type="STRING" id="484019.THA_279"/>
<dbReference type="KEGG" id="taf:THA_279"/>
<dbReference type="eggNOG" id="COG0184">
    <property type="taxonomic scope" value="Bacteria"/>
</dbReference>
<dbReference type="HOGENOM" id="CLU_148518_0_0_0"/>
<dbReference type="OrthoDB" id="9799262at2"/>
<dbReference type="Proteomes" id="UP000002453">
    <property type="component" value="Chromosome"/>
</dbReference>
<dbReference type="GO" id="GO:0022627">
    <property type="term" value="C:cytosolic small ribosomal subunit"/>
    <property type="evidence" value="ECO:0007669"/>
    <property type="project" value="TreeGrafter"/>
</dbReference>
<dbReference type="GO" id="GO:0019843">
    <property type="term" value="F:rRNA binding"/>
    <property type="evidence" value="ECO:0007669"/>
    <property type="project" value="UniProtKB-UniRule"/>
</dbReference>
<dbReference type="GO" id="GO:0003735">
    <property type="term" value="F:structural constituent of ribosome"/>
    <property type="evidence" value="ECO:0007669"/>
    <property type="project" value="InterPro"/>
</dbReference>
<dbReference type="GO" id="GO:0006412">
    <property type="term" value="P:translation"/>
    <property type="evidence" value="ECO:0007669"/>
    <property type="project" value="UniProtKB-UniRule"/>
</dbReference>
<dbReference type="CDD" id="cd00353">
    <property type="entry name" value="Ribosomal_S15p_S13e"/>
    <property type="match status" value="1"/>
</dbReference>
<dbReference type="FunFam" id="1.10.287.10:FF:000002">
    <property type="entry name" value="30S ribosomal protein S15"/>
    <property type="match status" value="1"/>
</dbReference>
<dbReference type="Gene3D" id="6.10.250.3130">
    <property type="match status" value="1"/>
</dbReference>
<dbReference type="Gene3D" id="1.10.287.10">
    <property type="entry name" value="S15/NS1, RNA-binding"/>
    <property type="match status" value="1"/>
</dbReference>
<dbReference type="HAMAP" id="MF_01343_B">
    <property type="entry name" value="Ribosomal_uS15_B"/>
    <property type="match status" value="1"/>
</dbReference>
<dbReference type="InterPro" id="IPR000589">
    <property type="entry name" value="Ribosomal_uS15"/>
</dbReference>
<dbReference type="InterPro" id="IPR005290">
    <property type="entry name" value="Ribosomal_uS15_bac-type"/>
</dbReference>
<dbReference type="InterPro" id="IPR009068">
    <property type="entry name" value="uS15_NS1_RNA-bd_sf"/>
</dbReference>
<dbReference type="NCBIfam" id="TIGR00952">
    <property type="entry name" value="S15_bact"/>
    <property type="match status" value="1"/>
</dbReference>
<dbReference type="PANTHER" id="PTHR23321">
    <property type="entry name" value="RIBOSOMAL PROTEIN S15, BACTERIAL AND ORGANELLAR"/>
    <property type="match status" value="1"/>
</dbReference>
<dbReference type="PANTHER" id="PTHR23321:SF26">
    <property type="entry name" value="SMALL RIBOSOMAL SUBUNIT PROTEIN US15M"/>
    <property type="match status" value="1"/>
</dbReference>
<dbReference type="Pfam" id="PF00312">
    <property type="entry name" value="Ribosomal_S15"/>
    <property type="match status" value="1"/>
</dbReference>
<dbReference type="SMART" id="SM01387">
    <property type="entry name" value="Ribosomal_S15"/>
    <property type="match status" value="1"/>
</dbReference>
<dbReference type="SUPFAM" id="SSF47060">
    <property type="entry name" value="S15/NS1 RNA-binding domain"/>
    <property type="match status" value="1"/>
</dbReference>
<dbReference type="PROSITE" id="PS00362">
    <property type="entry name" value="RIBOSOMAL_S15"/>
    <property type="match status" value="1"/>
</dbReference>